<protein>
    <recommendedName>
        <fullName evidence="3">Glucosyl-3-phosphoglycerate synthase</fullName>
        <shortName evidence="4">GpgS</shortName>
        <ecNumber evidence="2">2.4.1.266</ecNumber>
    </recommendedName>
</protein>
<comment type="function">
    <text evidence="2">Involved in the biosynthesis of 6-O-methylglucose lipopolysaccarides (MGLPs). Catalyzes the transfer of the glucose moiety from a nuleotide sugar such as UDP-alpha-D-glucose to the position 2 of 3-phospho-D-glycerate (3-PGA) to form glucosyl-3-phosphoglycerate (GPG). It can use UDP-glucose, ADP-glucose and GDP-glucose as sugar donor substrates with decreasing affinity and with 3-PGA as an acceptor. D-glycerate can only be an acceptor with ADP-glucose and at a very low rate.</text>
</comment>
<comment type="catalytic activity">
    <reaction evidence="2">
        <text>an NDP-alpha-D-glucose + (2R)-3-phosphoglycerate = (2R)-2-O-(alpha-D-glucopyranosyl)-3-phospho-glycerate + a ribonucleoside 5'-diphosphate + H(+)</text>
        <dbReference type="Rhea" id="RHEA:47244"/>
        <dbReference type="ChEBI" id="CHEBI:15378"/>
        <dbReference type="ChEBI" id="CHEBI:57930"/>
        <dbReference type="ChEBI" id="CHEBI:58272"/>
        <dbReference type="ChEBI" id="CHEBI:62600"/>
        <dbReference type="ChEBI" id="CHEBI:76533"/>
        <dbReference type="EC" id="2.4.1.266"/>
    </reaction>
    <physiologicalReaction direction="left-to-right" evidence="5">
        <dbReference type="Rhea" id="RHEA:47245"/>
    </physiologicalReaction>
</comment>
<comment type="catalytic activity">
    <reaction evidence="2">
        <text>(2R)-3-phosphoglycerate + UDP-alpha-D-glucose = (2R)-2-O-(alpha-D-glucopyranosyl)-3-phospho-glycerate + UDP + H(+)</text>
        <dbReference type="Rhea" id="RHEA:31319"/>
        <dbReference type="ChEBI" id="CHEBI:15378"/>
        <dbReference type="ChEBI" id="CHEBI:58223"/>
        <dbReference type="ChEBI" id="CHEBI:58272"/>
        <dbReference type="ChEBI" id="CHEBI:58885"/>
        <dbReference type="ChEBI" id="CHEBI:62600"/>
        <dbReference type="EC" id="2.4.1.266"/>
    </reaction>
    <physiologicalReaction direction="left-to-right" evidence="5">
        <dbReference type="Rhea" id="RHEA:31320"/>
    </physiologicalReaction>
</comment>
<comment type="catalytic activity">
    <reaction evidence="2">
        <text>ADP-alpha-D-glucose + (2R)-3-phosphoglycerate = (2R)-2-O-(alpha-D-glucopyranosyl)-3-phospho-glycerate + ADP + H(+)</text>
        <dbReference type="Rhea" id="RHEA:31311"/>
        <dbReference type="ChEBI" id="CHEBI:15378"/>
        <dbReference type="ChEBI" id="CHEBI:57498"/>
        <dbReference type="ChEBI" id="CHEBI:58272"/>
        <dbReference type="ChEBI" id="CHEBI:62600"/>
        <dbReference type="ChEBI" id="CHEBI:456216"/>
        <dbReference type="EC" id="2.4.1.266"/>
    </reaction>
    <physiologicalReaction direction="left-to-right" evidence="5">
        <dbReference type="Rhea" id="RHEA:31312"/>
    </physiologicalReaction>
</comment>
<comment type="catalytic activity">
    <reaction evidence="2">
        <text>GDP-D-glucose + (2R)-3-phosphoglycerate = (2R)-2-O-(alpha-D-glucopyranosyl)-3-phospho-glycerate + GDP + H(+)</text>
        <dbReference type="Rhea" id="RHEA:31315"/>
        <dbReference type="ChEBI" id="CHEBI:15378"/>
        <dbReference type="ChEBI" id="CHEBI:58127"/>
        <dbReference type="ChEBI" id="CHEBI:58189"/>
        <dbReference type="ChEBI" id="CHEBI:58272"/>
        <dbReference type="ChEBI" id="CHEBI:62600"/>
        <dbReference type="EC" id="2.4.1.266"/>
    </reaction>
    <physiologicalReaction direction="left-to-right" evidence="5">
        <dbReference type="Rhea" id="RHEA:31316"/>
    </physiologicalReaction>
</comment>
<comment type="cofactor">
    <cofactor evidence="2">
        <name>Mg(2+)</name>
        <dbReference type="ChEBI" id="CHEBI:18420"/>
    </cofactor>
    <cofactor evidence="1">
        <name>Mn(2+)</name>
        <dbReference type="ChEBI" id="CHEBI:29035"/>
    </cofactor>
    <text evidence="2">Requires divalent cations for activity. The maximum activity is observed between 20 and 75 mM of MgCl(2).</text>
</comment>
<comment type="biophysicochemical properties">
    <kinetics>
        <KM evidence="2">0.04 mM for 3-PGA (at 37 degrees Celsius)</KM>
        <KM evidence="2">2.43 mM for UDP-glucose (at 37 degrees Celsius)</KM>
        <KM evidence="2">6.63 mM for ADP-glucose (at 37 degrees Celsius)</KM>
        <KM evidence="2">27.7 mM for GDP-glucose (at 37 degrees Celsius)</KM>
        <Vmax evidence="2">1.42 umol/min/mg enzyme towards 3-PGA</Vmax>
        <Vmax evidence="2">1.56 umol/min/mg enzyme towards UDP-glucose</Vmax>
        <Vmax evidence="2">1.69 umol/min/mg enzyme towards GDP-glucose</Vmax>
        <Vmax evidence="2">3.56 umol/min/mg enzyme towards ADP-glucose</Vmax>
    </kinetics>
    <phDependence>
        <text evidence="2">Optimum pH is 8.</text>
    </phDependence>
    <temperatureDependence>
        <text evidence="2">Optimum temperature is 45 degrees Celsius. The activity is undetectable below 20 and above 55 degrees Celsius.</text>
    </temperatureDependence>
</comment>
<comment type="subunit">
    <text evidence="2">Homotrimer.</text>
</comment>
<comment type="similarity">
    <text evidence="4">Belongs to the glycosyltransferase 2 family.</text>
</comment>
<organism>
    <name type="scientific">Mycobacterium bovis (strain ATCC BAA-935 / AF2122/97)</name>
    <dbReference type="NCBI Taxonomy" id="233413"/>
    <lineage>
        <taxon>Bacteria</taxon>
        <taxon>Bacillati</taxon>
        <taxon>Actinomycetota</taxon>
        <taxon>Actinomycetes</taxon>
        <taxon>Mycobacteriales</taxon>
        <taxon>Mycobacteriaceae</taxon>
        <taxon>Mycobacterium</taxon>
        <taxon>Mycobacterium tuberculosis complex</taxon>
    </lineage>
</organism>
<reference key="1">
    <citation type="journal article" date="2003" name="Proc. Natl. Acad. Sci. U.S.A.">
        <title>The complete genome sequence of Mycobacterium bovis.</title>
        <authorList>
            <person name="Garnier T."/>
            <person name="Eiglmeier K."/>
            <person name="Camus J.-C."/>
            <person name="Medina N."/>
            <person name="Mansoor H."/>
            <person name="Pryor M."/>
            <person name="Duthoy S."/>
            <person name="Grondin S."/>
            <person name="Lacroix C."/>
            <person name="Monsempe C."/>
            <person name="Simon S."/>
            <person name="Harris B."/>
            <person name="Atkin R."/>
            <person name="Doggett J."/>
            <person name="Mayes R."/>
            <person name="Keating L."/>
            <person name="Wheeler P.R."/>
            <person name="Parkhill J."/>
            <person name="Barrell B.G."/>
            <person name="Cole S.T."/>
            <person name="Gordon S.V."/>
            <person name="Hewinson R.G."/>
        </authorList>
    </citation>
    <scope>NUCLEOTIDE SEQUENCE [LARGE SCALE GENOMIC DNA]</scope>
    <source>
        <strain>ATCC BAA-935 / AF2122/97</strain>
    </source>
</reference>
<reference key="2">
    <citation type="journal article" date="2017" name="Genome Announc.">
        <title>Updated reference genome sequence and annotation of Mycobacterium bovis AF2122/97.</title>
        <authorList>
            <person name="Malone K.M."/>
            <person name="Farrell D."/>
            <person name="Stuber T.P."/>
            <person name="Schubert O.T."/>
            <person name="Aebersold R."/>
            <person name="Robbe-Austerman S."/>
            <person name="Gordon S.V."/>
        </authorList>
    </citation>
    <scope>NUCLEOTIDE SEQUENCE [LARGE SCALE GENOMIC DNA]</scope>
    <scope>GENOME REANNOTATION</scope>
    <source>
        <strain>ATCC BAA-935 / AF2122/97</strain>
    </source>
</reference>
<reference key="3">
    <citation type="journal article" date="2008" name="FEMS Microbiol. Lett.">
        <title>Identification of the mycobacterial glucosyl-3-phosphoglycerate synthase.</title>
        <authorList>
            <person name="Empadinhas N."/>
            <person name="Albuquerque L."/>
            <person name="Mendes V."/>
            <person name="Macedo-Ribeiro S."/>
            <person name="da Costa M.S."/>
        </authorList>
    </citation>
    <scope>FUNCTION</scope>
    <scope>CATALYTIC ACTIVITY</scope>
    <scope>SUBSTRATE SPECIFICITY</scope>
    <scope>BIOPHYSICOCHEMICAL PROPERTIES</scope>
    <scope>COFACTOR</scope>
    <scope>SUBUNIT</scope>
    <source>
        <strain>ATCC BAA-935 / AF2122/97</strain>
    </source>
</reference>
<reference key="4">
    <citation type="journal article" date="2017" name="Structure">
        <title>Structural snapshots and loop dynamics along the catalytic cycle of glycosyltransferase GpgS.</title>
        <authorList>
            <person name="Albesa-Jove D."/>
            <person name="Romero-Garcia J."/>
            <person name="Sancho-Vaello E."/>
            <person name="Contreras F.X."/>
            <person name="Rodrigo-Unzueta A."/>
            <person name="Comino N."/>
            <person name="Carreras-Gonzalez A."/>
            <person name="Arrasate P."/>
            <person name="Urresti S."/>
            <person name="Biarnes X."/>
            <person name="Planas A."/>
            <person name="Guerin M.E."/>
        </authorList>
    </citation>
    <scope>X-RAY CRYSTALLOGRAPHY (2.82 ANGSTROMS) IN COMPLEX WITH UDP</scope>
</reference>
<sequence length="324" mass="34379">MTASELVAGDLAGGRAPGALPLDTTWHRPGWTIGELEAAKAGRTISVVLPALNEEATIESVIDSISPLVDGLVDELIVLDSGSTDDTEIRAIASGARVVSREQALPEVPVRPGKGEALWRSLAATSGDIVVFIDSDLINPHPLFVPWLVGPLLTGEGIQLVKSFYRRPLQVSDVTSGVCATGGGRVTELVARPLLAALRPELGCVLQPLSGEYAASRELLTSLPFAPGYGVEIGLLIDTFDRLGLDAIAQVNLGVRAHRNRPLDELGAMSRQVIATLLSRCGIPDSGVGLTQFLPGGPDDSDYTRHTWPVSLVDRPPMKVMRPR</sequence>
<gene>
    <name type="primary">gpgS</name>
    <name type="ordered locus">BQ2027_MB1240</name>
</gene>
<proteinExistence type="evidence at protein level"/>
<feature type="chain" id="PRO_0000420166" description="Glucosyl-3-phosphoglycerate synthase">
    <location>
        <begin position="1"/>
        <end position="324"/>
    </location>
</feature>
<feature type="binding site" evidence="1">
    <location>
        <begin position="50"/>
        <end position="54"/>
    </location>
    <ligand>
        <name>UDP-alpha-D-glucose</name>
        <dbReference type="ChEBI" id="CHEBI:58885"/>
    </ligand>
</feature>
<feature type="binding site" evidence="1">
    <location>
        <position position="81"/>
    </location>
    <ligand>
        <name>UDP-alpha-D-glucose</name>
        <dbReference type="ChEBI" id="CHEBI:58885"/>
    </ligand>
</feature>
<feature type="binding site" evidence="1">
    <location>
        <position position="114"/>
    </location>
    <ligand>
        <name>UDP-alpha-D-glucose</name>
        <dbReference type="ChEBI" id="CHEBI:58885"/>
    </ligand>
</feature>
<feature type="binding site" evidence="1">
    <location>
        <begin position="134"/>
        <end position="135"/>
    </location>
    <ligand>
        <name>UDP-alpha-D-glucose</name>
        <dbReference type="ChEBI" id="CHEBI:58885"/>
    </ligand>
</feature>
<feature type="binding site" evidence="1">
    <location>
        <position position="136"/>
    </location>
    <ligand>
        <name>Mn(2+)</name>
        <dbReference type="ChEBI" id="CHEBI:29035"/>
    </ligand>
</feature>
<feature type="binding site" evidence="1">
    <location>
        <begin position="184"/>
        <end position="187"/>
    </location>
    <ligand>
        <name>(2R)-3-phosphoglycerate</name>
        <dbReference type="ChEBI" id="CHEBI:58272"/>
    </ligand>
</feature>
<feature type="binding site" evidence="1">
    <location>
        <begin position="229"/>
        <end position="232"/>
    </location>
    <ligand>
        <name>UDP-alpha-D-glucose</name>
        <dbReference type="ChEBI" id="CHEBI:58885"/>
    </ligand>
</feature>
<feature type="binding site" evidence="1">
    <location>
        <begin position="256"/>
        <end position="261"/>
    </location>
    <ligand>
        <name>UDP-alpha-D-glucose</name>
        <dbReference type="ChEBI" id="CHEBI:58885"/>
    </ligand>
</feature>
<feature type="binding site" evidence="1">
    <location>
        <position position="258"/>
    </location>
    <ligand>
        <name>Mn(2+)</name>
        <dbReference type="ChEBI" id="CHEBI:29035"/>
    </ligand>
</feature>
<feature type="binding site" evidence="1">
    <location>
        <position position="260"/>
    </location>
    <ligand>
        <name>(2R)-3-phosphoglycerate</name>
        <dbReference type="ChEBI" id="CHEBI:58272"/>
    </ligand>
</feature>
<feature type="strand" evidence="6">
    <location>
        <begin position="23"/>
        <end position="25"/>
    </location>
</feature>
<feature type="helix" evidence="6">
    <location>
        <begin position="33"/>
        <end position="39"/>
    </location>
</feature>
<feature type="turn" evidence="6">
    <location>
        <begin position="40"/>
        <end position="42"/>
    </location>
</feature>
<feature type="strand" evidence="6">
    <location>
        <begin position="45"/>
        <end position="53"/>
    </location>
</feature>
<feature type="turn" evidence="6">
    <location>
        <begin position="55"/>
        <end position="57"/>
    </location>
</feature>
<feature type="helix" evidence="6">
    <location>
        <begin position="58"/>
        <end position="65"/>
    </location>
</feature>
<feature type="helix" evidence="6">
    <location>
        <begin position="66"/>
        <end position="68"/>
    </location>
</feature>
<feature type="turn" evidence="6">
    <location>
        <begin position="70"/>
        <end position="72"/>
    </location>
</feature>
<feature type="strand" evidence="6">
    <location>
        <begin position="73"/>
        <end position="80"/>
    </location>
</feature>
<feature type="helix" evidence="6">
    <location>
        <begin position="87"/>
        <end position="93"/>
    </location>
</feature>
<feature type="strand" evidence="6">
    <location>
        <begin position="97"/>
        <end position="100"/>
    </location>
</feature>
<feature type="helix" evidence="6">
    <location>
        <begin position="101"/>
        <end position="104"/>
    </location>
</feature>
<feature type="helix" evidence="6">
    <location>
        <begin position="114"/>
        <end position="121"/>
    </location>
</feature>
<feature type="helix" evidence="6">
    <location>
        <begin position="122"/>
        <end position="124"/>
    </location>
</feature>
<feature type="strand" evidence="6">
    <location>
        <begin position="128"/>
        <end position="132"/>
    </location>
</feature>
<feature type="helix" evidence="6">
    <location>
        <begin position="144"/>
        <end position="153"/>
    </location>
</feature>
<feature type="strand" evidence="6">
    <location>
        <begin position="154"/>
        <end position="157"/>
    </location>
</feature>
<feature type="strand" evidence="6">
    <location>
        <begin position="160"/>
        <end position="166"/>
    </location>
</feature>
<feature type="helix" evidence="6">
    <location>
        <begin position="185"/>
        <end position="189"/>
    </location>
</feature>
<feature type="helix" evidence="6">
    <location>
        <begin position="191"/>
        <end position="198"/>
    </location>
</feature>
<feature type="helix" evidence="6">
    <location>
        <begin position="200"/>
        <end position="202"/>
    </location>
</feature>
<feature type="strand" evidence="6">
    <location>
        <begin position="213"/>
        <end position="216"/>
    </location>
</feature>
<feature type="helix" evidence="6">
    <location>
        <begin position="217"/>
        <end position="220"/>
    </location>
</feature>
<feature type="helix" evidence="6">
    <location>
        <begin position="228"/>
        <end position="230"/>
    </location>
</feature>
<feature type="helix" evidence="6">
    <location>
        <begin position="231"/>
        <end position="243"/>
    </location>
</feature>
<feature type="helix" evidence="6">
    <location>
        <begin position="245"/>
        <end position="247"/>
    </location>
</feature>
<feature type="strand" evidence="6">
    <location>
        <begin position="248"/>
        <end position="255"/>
    </location>
</feature>
<feature type="helix" evidence="6">
    <location>
        <begin position="263"/>
        <end position="280"/>
    </location>
</feature>
<feature type="strand" evidence="6">
    <location>
        <begin position="291"/>
        <end position="294"/>
    </location>
</feature>
<feature type="strand" evidence="6">
    <location>
        <begin position="303"/>
        <end position="307"/>
    </location>
</feature>
<feature type="helix" evidence="6">
    <location>
        <begin position="318"/>
        <end position="321"/>
    </location>
</feature>
<dbReference type="EC" id="2.4.1.266" evidence="2"/>
<dbReference type="EMBL" id="LT708304">
    <property type="protein sequence ID" value="SIT99841.1"/>
    <property type="molecule type" value="Genomic_DNA"/>
</dbReference>
<dbReference type="RefSeq" id="NP_854894.1">
    <property type="nucleotide sequence ID" value="NC_002945.3"/>
</dbReference>
<dbReference type="RefSeq" id="WP_003406242.1">
    <property type="nucleotide sequence ID" value="NC_002945.4"/>
</dbReference>
<dbReference type="PDB" id="5JUD">
    <property type="method" value="X-ray"/>
    <property type="resolution" value="2.59 A"/>
    <property type="chains" value="A=1-324"/>
</dbReference>
<dbReference type="PDBsum" id="5JUD"/>
<dbReference type="SMR" id="Q7U0E1"/>
<dbReference type="CAZy" id="GT81">
    <property type="family name" value="Glycosyltransferase Family 81"/>
</dbReference>
<dbReference type="KEGG" id="mbo:BQ2027_MB1240"/>
<dbReference type="PATRIC" id="fig|233413.5.peg.1360"/>
<dbReference type="Proteomes" id="UP000001419">
    <property type="component" value="Chromosome"/>
</dbReference>
<dbReference type="GO" id="GO:0016757">
    <property type="term" value="F:glycosyltransferase activity"/>
    <property type="evidence" value="ECO:0007669"/>
    <property type="project" value="UniProtKB-KW"/>
</dbReference>
<dbReference type="GO" id="GO:0046872">
    <property type="term" value="F:metal ion binding"/>
    <property type="evidence" value="ECO:0007669"/>
    <property type="project" value="UniProtKB-KW"/>
</dbReference>
<dbReference type="FunFam" id="3.90.550.10:FF:000242">
    <property type="entry name" value="Glucosyl-3-phosphoglycerate synthase"/>
    <property type="match status" value="1"/>
</dbReference>
<dbReference type="Gene3D" id="3.90.550.10">
    <property type="entry name" value="Spore Coat Polysaccharide Biosynthesis Protein SpsA, Chain A"/>
    <property type="match status" value="1"/>
</dbReference>
<dbReference type="InterPro" id="IPR001173">
    <property type="entry name" value="Glyco_trans_2-like"/>
</dbReference>
<dbReference type="InterPro" id="IPR050256">
    <property type="entry name" value="Glycosyltransferase_2"/>
</dbReference>
<dbReference type="InterPro" id="IPR029044">
    <property type="entry name" value="Nucleotide-diphossugar_trans"/>
</dbReference>
<dbReference type="NCBIfam" id="NF010496">
    <property type="entry name" value="PRK13915.1"/>
    <property type="match status" value="1"/>
</dbReference>
<dbReference type="PANTHER" id="PTHR48090:SF10">
    <property type="entry name" value="GLUCOSYL-3-PHOSPHOGLYCERATE SYNTHASE"/>
    <property type="match status" value="1"/>
</dbReference>
<dbReference type="PANTHER" id="PTHR48090">
    <property type="entry name" value="UNDECAPRENYL-PHOSPHATE 4-DEOXY-4-FORMAMIDO-L-ARABINOSE TRANSFERASE-RELATED"/>
    <property type="match status" value="1"/>
</dbReference>
<dbReference type="Pfam" id="PF00535">
    <property type="entry name" value="Glycos_transf_2"/>
    <property type="match status" value="1"/>
</dbReference>
<dbReference type="SUPFAM" id="SSF53448">
    <property type="entry name" value="Nucleotide-diphospho-sugar transferases"/>
    <property type="match status" value="1"/>
</dbReference>
<accession>Q7U0E1</accession>
<accession>A0A1R3XXP0</accession>
<accession>X2BGZ8</accession>
<name>GPGS_MYCBO</name>
<keyword id="KW-0002">3D-structure</keyword>
<keyword id="KW-0328">Glycosyltransferase</keyword>
<keyword id="KW-0460">Magnesium</keyword>
<keyword id="KW-0464">Manganese</keyword>
<keyword id="KW-0479">Metal-binding</keyword>
<keyword id="KW-1185">Reference proteome</keyword>
<keyword id="KW-0808">Transferase</keyword>
<evidence type="ECO:0000250" key="1">
    <source>
        <dbReference type="UniProtKB" id="P9WMW9"/>
    </source>
</evidence>
<evidence type="ECO:0000269" key="2">
    <source>
    </source>
</evidence>
<evidence type="ECO:0000303" key="3">
    <source>
    </source>
</evidence>
<evidence type="ECO:0000305" key="4"/>
<evidence type="ECO:0000305" key="5">
    <source>
    </source>
</evidence>
<evidence type="ECO:0007829" key="6">
    <source>
        <dbReference type="PDB" id="5JUD"/>
    </source>
</evidence>